<dbReference type="EC" id="1.1.1.86" evidence="1"/>
<dbReference type="EMBL" id="CP000099">
    <property type="protein sequence ID" value="AAZ69204.1"/>
    <property type="molecule type" value="Genomic_DNA"/>
</dbReference>
<dbReference type="SMR" id="Q46FY8"/>
<dbReference type="STRING" id="269797.Mbar_A0220"/>
<dbReference type="PaxDb" id="269797-Mbar_A0220"/>
<dbReference type="KEGG" id="mba:Mbar_A0220"/>
<dbReference type="eggNOG" id="arCOG04465">
    <property type="taxonomic scope" value="Archaea"/>
</dbReference>
<dbReference type="HOGENOM" id="CLU_033821_0_1_2"/>
<dbReference type="OrthoDB" id="6064at2157"/>
<dbReference type="UniPathway" id="UPA00047">
    <property type="reaction ID" value="UER00056"/>
</dbReference>
<dbReference type="UniPathway" id="UPA00049">
    <property type="reaction ID" value="UER00060"/>
</dbReference>
<dbReference type="GO" id="GO:0004455">
    <property type="term" value="F:ketol-acid reductoisomerase activity"/>
    <property type="evidence" value="ECO:0007669"/>
    <property type="project" value="UniProtKB-UniRule"/>
</dbReference>
<dbReference type="GO" id="GO:0000287">
    <property type="term" value="F:magnesium ion binding"/>
    <property type="evidence" value="ECO:0007669"/>
    <property type="project" value="UniProtKB-UniRule"/>
</dbReference>
<dbReference type="GO" id="GO:0050661">
    <property type="term" value="F:NADP binding"/>
    <property type="evidence" value="ECO:0007669"/>
    <property type="project" value="InterPro"/>
</dbReference>
<dbReference type="GO" id="GO:0009097">
    <property type="term" value="P:isoleucine biosynthetic process"/>
    <property type="evidence" value="ECO:0007669"/>
    <property type="project" value="UniProtKB-UniRule"/>
</dbReference>
<dbReference type="GO" id="GO:0009099">
    <property type="term" value="P:L-valine biosynthetic process"/>
    <property type="evidence" value="ECO:0007669"/>
    <property type="project" value="UniProtKB-UniRule"/>
</dbReference>
<dbReference type="FunFam" id="3.40.50.720:FF:000023">
    <property type="entry name" value="Ketol-acid reductoisomerase (NADP(+))"/>
    <property type="match status" value="1"/>
</dbReference>
<dbReference type="Gene3D" id="6.10.240.10">
    <property type="match status" value="1"/>
</dbReference>
<dbReference type="Gene3D" id="3.40.50.720">
    <property type="entry name" value="NAD(P)-binding Rossmann-like Domain"/>
    <property type="match status" value="1"/>
</dbReference>
<dbReference type="HAMAP" id="MF_00435">
    <property type="entry name" value="IlvC"/>
    <property type="match status" value="1"/>
</dbReference>
<dbReference type="InterPro" id="IPR008927">
    <property type="entry name" value="6-PGluconate_DH-like_C_sf"/>
</dbReference>
<dbReference type="InterPro" id="IPR013023">
    <property type="entry name" value="KARI"/>
</dbReference>
<dbReference type="InterPro" id="IPR000506">
    <property type="entry name" value="KARI_C"/>
</dbReference>
<dbReference type="InterPro" id="IPR013116">
    <property type="entry name" value="KARI_N"/>
</dbReference>
<dbReference type="InterPro" id="IPR014359">
    <property type="entry name" value="KARI_prok"/>
</dbReference>
<dbReference type="InterPro" id="IPR036291">
    <property type="entry name" value="NAD(P)-bd_dom_sf"/>
</dbReference>
<dbReference type="NCBIfam" id="TIGR00465">
    <property type="entry name" value="ilvC"/>
    <property type="match status" value="1"/>
</dbReference>
<dbReference type="NCBIfam" id="NF004017">
    <property type="entry name" value="PRK05479.1"/>
    <property type="match status" value="1"/>
</dbReference>
<dbReference type="NCBIfam" id="NF009940">
    <property type="entry name" value="PRK13403.1"/>
    <property type="match status" value="1"/>
</dbReference>
<dbReference type="PANTHER" id="PTHR21371">
    <property type="entry name" value="KETOL-ACID REDUCTOISOMERASE, MITOCHONDRIAL"/>
    <property type="match status" value="1"/>
</dbReference>
<dbReference type="PANTHER" id="PTHR21371:SF1">
    <property type="entry name" value="KETOL-ACID REDUCTOISOMERASE, MITOCHONDRIAL"/>
    <property type="match status" value="1"/>
</dbReference>
<dbReference type="Pfam" id="PF01450">
    <property type="entry name" value="KARI_C"/>
    <property type="match status" value="1"/>
</dbReference>
<dbReference type="Pfam" id="PF07991">
    <property type="entry name" value="KARI_N"/>
    <property type="match status" value="1"/>
</dbReference>
<dbReference type="PIRSF" id="PIRSF000116">
    <property type="entry name" value="IlvC_gammaproteo"/>
    <property type="match status" value="1"/>
</dbReference>
<dbReference type="SUPFAM" id="SSF48179">
    <property type="entry name" value="6-phosphogluconate dehydrogenase C-terminal domain-like"/>
    <property type="match status" value="1"/>
</dbReference>
<dbReference type="SUPFAM" id="SSF51735">
    <property type="entry name" value="NAD(P)-binding Rossmann-fold domains"/>
    <property type="match status" value="1"/>
</dbReference>
<dbReference type="PROSITE" id="PS51851">
    <property type="entry name" value="KARI_C"/>
    <property type="match status" value="1"/>
</dbReference>
<dbReference type="PROSITE" id="PS51850">
    <property type="entry name" value="KARI_N"/>
    <property type="match status" value="1"/>
</dbReference>
<proteinExistence type="inferred from homology"/>
<name>ILVC_METBF</name>
<organism>
    <name type="scientific">Methanosarcina barkeri (strain Fusaro / DSM 804)</name>
    <dbReference type="NCBI Taxonomy" id="269797"/>
    <lineage>
        <taxon>Archaea</taxon>
        <taxon>Methanobacteriati</taxon>
        <taxon>Methanobacteriota</taxon>
        <taxon>Stenosarchaea group</taxon>
        <taxon>Methanomicrobia</taxon>
        <taxon>Methanosarcinales</taxon>
        <taxon>Methanosarcinaceae</taxon>
        <taxon>Methanosarcina</taxon>
    </lineage>
</organism>
<sequence length="335" mass="36994">MAKIIYDNETTFDALKDKTIAIMGYGSQGHAHARNLHESGLNVIVGLRKSSSSWAKAENDGLKVMTVAEAAKAADVIMILLPDENQASVYYSEIAPNLEAGNALAFAHGFNIHYNQIVPPKDVDVFMAAPKGPGHIVRRTYTEGIGVPALIAVYQDATGNAREIALSYVKGIGATRAGVYETTFREETETDLFGEQVDLCGGLSSLIKTAFETLVEAGYQPEMAYFETCHEVKLIVDLIYEGGLERMWHSVSNTAEYGGMTVGPRIINDESREAMREALKRIQNGEFAKEFVLEGMVNHPVLKAMERQEKEHQLEVVGKQIRANIPWLNREIDDD</sequence>
<comment type="function">
    <text evidence="1">Involved in the biosynthesis of branched-chain amino acids (BCAA). Catalyzes an alkyl-migration followed by a ketol-acid reduction of (S)-2-acetolactate (S2AL) to yield (R)-2,3-dihydroxy-isovalerate. In the isomerase reaction, S2AL is rearranged via a Mg-dependent methyl migration to produce 3-hydroxy-3-methyl-2-ketobutyrate (HMKB). In the reductase reaction, this 2-ketoacid undergoes a metal-dependent reduction by NADPH to yield (R)-2,3-dihydroxy-isovalerate.</text>
</comment>
<comment type="catalytic activity">
    <reaction evidence="1">
        <text>(2R)-2,3-dihydroxy-3-methylbutanoate + NADP(+) = (2S)-2-acetolactate + NADPH + H(+)</text>
        <dbReference type="Rhea" id="RHEA:22068"/>
        <dbReference type="ChEBI" id="CHEBI:15378"/>
        <dbReference type="ChEBI" id="CHEBI:49072"/>
        <dbReference type="ChEBI" id="CHEBI:57783"/>
        <dbReference type="ChEBI" id="CHEBI:58349"/>
        <dbReference type="ChEBI" id="CHEBI:58476"/>
        <dbReference type="EC" id="1.1.1.86"/>
    </reaction>
</comment>
<comment type="catalytic activity">
    <reaction evidence="1">
        <text>(2R,3R)-2,3-dihydroxy-3-methylpentanoate + NADP(+) = (S)-2-ethyl-2-hydroxy-3-oxobutanoate + NADPH + H(+)</text>
        <dbReference type="Rhea" id="RHEA:13493"/>
        <dbReference type="ChEBI" id="CHEBI:15378"/>
        <dbReference type="ChEBI" id="CHEBI:49256"/>
        <dbReference type="ChEBI" id="CHEBI:49258"/>
        <dbReference type="ChEBI" id="CHEBI:57783"/>
        <dbReference type="ChEBI" id="CHEBI:58349"/>
        <dbReference type="EC" id="1.1.1.86"/>
    </reaction>
</comment>
<comment type="cofactor">
    <cofactor evidence="1">
        <name>Mg(2+)</name>
        <dbReference type="ChEBI" id="CHEBI:18420"/>
    </cofactor>
    <text evidence="1">Binds 2 magnesium ions per subunit.</text>
</comment>
<comment type="pathway">
    <text evidence="1">Amino-acid biosynthesis; L-isoleucine biosynthesis; L-isoleucine from 2-oxobutanoate: step 2/4.</text>
</comment>
<comment type="pathway">
    <text evidence="1">Amino-acid biosynthesis; L-valine biosynthesis; L-valine from pyruvate: step 2/4.</text>
</comment>
<comment type="similarity">
    <text evidence="1">Belongs to the ketol-acid reductoisomerase family.</text>
</comment>
<protein>
    <recommendedName>
        <fullName evidence="1">Ketol-acid reductoisomerase (NADP(+))</fullName>
        <shortName evidence="1">KARI</shortName>
        <ecNumber evidence="1">1.1.1.86</ecNumber>
    </recommendedName>
    <alternativeName>
        <fullName evidence="1">Acetohydroxy-acid isomeroreductase</fullName>
        <shortName evidence="1">AHIR</shortName>
    </alternativeName>
    <alternativeName>
        <fullName evidence="1">Alpha-keto-beta-hydroxylacyl reductoisomerase</fullName>
    </alternativeName>
    <alternativeName>
        <fullName evidence="1">Ketol-acid reductoisomerase type 1</fullName>
    </alternativeName>
    <alternativeName>
        <fullName evidence="1">Ketol-acid reductoisomerase type I</fullName>
    </alternativeName>
</protein>
<reference key="1">
    <citation type="journal article" date="2006" name="J. Bacteriol.">
        <title>The Methanosarcina barkeri genome: comparative analysis with Methanosarcina acetivorans and Methanosarcina mazei reveals extensive rearrangement within methanosarcinal genomes.</title>
        <authorList>
            <person name="Maeder D.L."/>
            <person name="Anderson I."/>
            <person name="Brettin T.S."/>
            <person name="Bruce D.C."/>
            <person name="Gilna P."/>
            <person name="Han C.S."/>
            <person name="Lapidus A."/>
            <person name="Metcalf W.W."/>
            <person name="Saunders E."/>
            <person name="Tapia R."/>
            <person name="Sowers K.R."/>
        </authorList>
    </citation>
    <scope>NUCLEOTIDE SEQUENCE [LARGE SCALE GENOMIC DNA]</scope>
    <source>
        <strain>Fusaro / DSM 804</strain>
    </source>
</reference>
<gene>
    <name evidence="1" type="primary">ilvC</name>
    <name type="ordered locus">Mbar_A0220</name>
</gene>
<feature type="chain" id="PRO_0000226217" description="Ketol-acid reductoisomerase (NADP(+))">
    <location>
        <begin position="1"/>
        <end position="335"/>
    </location>
</feature>
<feature type="domain" description="KARI N-terminal Rossmann" evidence="2">
    <location>
        <begin position="2"/>
        <end position="182"/>
    </location>
</feature>
<feature type="domain" description="KARI C-terminal knotted" evidence="3">
    <location>
        <begin position="183"/>
        <end position="328"/>
    </location>
</feature>
<feature type="active site" evidence="1">
    <location>
        <position position="108"/>
    </location>
</feature>
<feature type="binding site" evidence="1">
    <location>
        <begin position="25"/>
        <end position="28"/>
    </location>
    <ligand>
        <name>NADP(+)</name>
        <dbReference type="ChEBI" id="CHEBI:58349"/>
    </ligand>
</feature>
<feature type="binding site" evidence="1">
    <location>
        <position position="48"/>
    </location>
    <ligand>
        <name>NADP(+)</name>
        <dbReference type="ChEBI" id="CHEBI:58349"/>
    </ligand>
</feature>
<feature type="binding site" evidence="1">
    <location>
        <position position="51"/>
    </location>
    <ligand>
        <name>NADP(+)</name>
        <dbReference type="ChEBI" id="CHEBI:58349"/>
    </ligand>
</feature>
<feature type="binding site" evidence="1">
    <location>
        <position position="53"/>
    </location>
    <ligand>
        <name>NADP(+)</name>
        <dbReference type="ChEBI" id="CHEBI:58349"/>
    </ligand>
</feature>
<feature type="binding site" evidence="1">
    <location>
        <begin position="83"/>
        <end position="86"/>
    </location>
    <ligand>
        <name>NADP(+)</name>
        <dbReference type="ChEBI" id="CHEBI:58349"/>
    </ligand>
</feature>
<feature type="binding site" evidence="1">
    <location>
        <position position="134"/>
    </location>
    <ligand>
        <name>NADP(+)</name>
        <dbReference type="ChEBI" id="CHEBI:58349"/>
    </ligand>
</feature>
<feature type="binding site" evidence="1">
    <location>
        <position position="191"/>
    </location>
    <ligand>
        <name>Mg(2+)</name>
        <dbReference type="ChEBI" id="CHEBI:18420"/>
        <label>1</label>
    </ligand>
</feature>
<feature type="binding site" evidence="1">
    <location>
        <position position="191"/>
    </location>
    <ligand>
        <name>Mg(2+)</name>
        <dbReference type="ChEBI" id="CHEBI:18420"/>
        <label>2</label>
    </ligand>
</feature>
<feature type="binding site" evidence="1">
    <location>
        <position position="195"/>
    </location>
    <ligand>
        <name>Mg(2+)</name>
        <dbReference type="ChEBI" id="CHEBI:18420"/>
        <label>1</label>
    </ligand>
</feature>
<feature type="binding site" evidence="1">
    <location>
        <position position="227"/>
    </location>
    <ligand>
        <name>Mg(2+)</name>
        <dbReference type="ChEBI" id="CHEBI:18420"/>
        <label>2</label>
    </ligand>
</feature>
<feature type="binding site" evidence="1">
    <location>
        <position position="231"/>
    </location>
    <ligand>
        <name>Mg(2+)</name>
        <dbReference type="ChEBI" id="CHEBI:18420"/>
        <label>2</label>
    </ligand>
</feature>
<feature type="binding site" evidence="1">
    <location>
        <position position="252"/>
    </location>
    <ligand>
        <name>substrate</name>
    </ligand>
</feature>
<accession>Q46FY8</accession>
<keyword id="KW-0028">Amino-acid biosynthesis</keyword>
<keyword id="KW-0100">Branched-chain amino acid biosynthesis</keyword>
<keyword id="KW-0460">Magnesium</keyword>
<keyword id="KW-0479">Metal-binding</keyword>
<keyword id="KW-0521">NADP</keyword>
<keyword id="KW-0560">Oxidoreductase</keyword>
<evidence type="ECO:0000255" key="1">
    <source>
        <dbReference type="HAMAP-Rule" id="MF_00435"/>
    </source>
</evidence>
<evidence type="ECO:0000255" key="2">
    <source>
        <dbReference type="PROSITE-ProRule" id="PRU01197"/>
    </source>
</evidence>
<evidence type="ECO:0000255" key="3">
    <source>
        <dbReference type="PROSITE-ProRule" id="PRU01198"/>
    </source>
</evidence>